<reference key="1">
    <citation type="journal article" date="1999" name="Nature">
        <title>Sequence and analysis of chromosome 4 of the plant Arabidopsis thaliana.</title>
        <authorList>
            <person name="Mayer K.F.X."/>
            <person name="Schueller C."/>
            <person name="Wambutt R."/>
            <person name="Murphy G."/>
            <person name="Volckaert G."/>
            <person name="Pohl T."/>
            <person name="Duesterhoeft A."/>
            <person name="Stiekema W."/>
            <person name="Entian K.-D."/>
            <person name="Terryn N."/>
            <person name="Harris B."/>
            <person name="Ansorge W."/>
            <person name="Brandt P."/>
            <person name="Grivell L.A."/>
            <person name="Rieger M."/>
            <person name="Weichselgartner M."/>
            <person name="de Simone V."/>
            <person name="Obermaier B."/>
            <person name="Mache R."/>
            <person name="Mueller M."/>
            <person name="Kreis M."/>
            <person name="Delseny M."/>
            <person name="Puigdomenech P."/>
            <person name="Watson M."/>
            <person name="Schmidtheini T."/>
            <person name="Reichert B."/>
            <person name="Portetelle D."/>
            <person name="Perez-Alonso M."/>
            <person name="Boutry M."/>
            <person name="Bancroft I."/>
            <person name="Vos P."/>
            <person name="Hoheisel J."/>
            <person name="Zimmermann W."/>
            <person name="Wedler H."/>
            <person name="Ridley P."/>
            <person name="Langham S.-A."/>
            <person name="McCullagh B."/>
            <person name="Bilham L."/>
            <person name="Robben J."/>
            <person name="van der Schueren J."/>
            <person name="Grymonprez B."/>
            <person name="Chuang Y.-J."/>
            <person name="Vandenbussche F."/>
            <person name="Braeken M."/>
            <person name="Weltjens I."/>
            <person name="Voet M."/>
            <person name="Bastiaens I."/>
            <person name="Aert R."/>
            <person name="Defoor E."/>
            <person name="Weitzenegger T."/>
            <person name="Bothe G."/>
            <person name="Ramsperger U."/>
            <person name="Hilbert H."/>
            <person name="Braun M."/>
            <person name="Holzer E."/>
            <person name="Brandt A."/>
            <person name="Peters S."/>
            <person name="van Staveren M."/>
            <person name="Dirkse W."/>
            <person name="Mooijman P."/>
            <person name="Klein Lankhorst R."/>
            <person name="Rose M."/>
            <person name="Hauf J."/>
            <person name="Koetter P."/>
            <person name="Berneiser S."/>
            <person name="Hempel S."/>
            <person name="Feldpausch M."/>
            <person name="Lamberth S."/>
            <person name="Van den Daele H."/>
            <person name="De Keyser A."/>
            <person name="Buysshaert C."/>
            <person name="Gielen J."/>
            <person name="Villarroel R."/>
            <person name="De Clercq R."/>
            <person name="van Montagu M."/>
            <person name="Rogers J."/>
            <person name="Cronin A."/>
            <person name="Quail M.A."/>
            <person name="Bray-Allen S."/>
            <person name="Clark L."/>
            <person name="Doggett J."/>
            <person name="Hall S."/>
            <person name="Kay M."/>
            <person name="Lennard N."/>
            <person name="McLay K."/>
            <person name="Mayes R."/>
            <person name="Pettett A."/>
            <person name="Rajandream M.A."/>
            <person name="Lyne M."/>
            <person name="Benes V."/>
            <person name="Rechmann S."/>
            <person name="Borkova D."/>
            <person name="Bloecker H."/>
            <person name="Scharfe M."/>
            <person name="Grimm M."/>
            <person name="Loehnert T.-H."/>
            <person name="Dose S."/>
            <person name="de Haan M."/>
            <person name="Maarse A.C."/>
            <person name="Schaefer M."/>
            <person name="Mueller-Auer S."/>
            <person name="Gabel C."/>
            <person name="Fuchs M."/>
            <person name="Fartmann B."/>
            <person name="Granderath K."/>
            <person name="Dauner D."/>
            <person name="Herzl A."/>
            <person name="Neumann S."/>
            <person name="Argiriou A."/>
            <person name="Vitale D."/>
            <person name="Liguori R."/>
            <person name="Piravandi E."/>
            <person name="Massenet O."/>
            <person name="Quigley F."/>
            <person name="Clabauld G."/>
            <person name="Muendlein A."/>
            <person name="Felber R."/>
            <person name="Schnabl S."/>
            <person name="Hiller R."/>
            <person name="Schmidt W."/>
            <person name="Lecharny A."/>
            <person name="Aubourg S."/>
            <person name="Chefdor F."/>
            <person name="Cooke R."/>
            <person name="Berger C."/>
            <person name="Monfort A."/>
            <person name="Casacuberta E."/>
            <person name="Gibbons T."/>
            <person name="Weber N."/>
            <person name="Vandenbol M."/>
            <person name="Bargues M."/>
            <person name="Terol J."/>
            <person name="Torres A."/>
            <person name="Perez-Perez A."/>
            <person name="Purnelle B."/>
            <person name="Bent E."/>
            <person name="Johnson S."/>
            <person name="Tacon D."/>
            <person name="Jesse T."/>
            <person name="Heijnen L."/>
            <person name="Schwarz S."/>
            <person name="Scholler P."/>
            <person name="Heber S."/>
            <person name="Francs P."/>
            <person name="Bielke C."/>
            <person name="Frishman D."/>
            <person name="Haase D."/>
            <person name="Lemcke K."/>
            <person name="Mewes H.-W."/>
            <person name="Stocker S."/>
            <person name="Zaccaria P."/>
            <person name="Bevan M."/>
            <person name="Wilson R.K."/>
            <person name="de la Bastide M."/>
            <person name="Habermann K."/>
            <person name="Parnell L."/>
            <person name="Dedhia N."/>
            <person name="Gnoj L."/>
            <person name="Schutz K."/>
            <person name="Huang E."/>
            <person name="Spiegel L."/>
            <person name="Sekhon M."/>
            <person name="Murray J."/>
            <person name="Sheet P."/>
            <person name="Cordes M."/>
            <person name="Abu-Threideh J."/>
            <person name="Stoneking T."/>
            <person name="Kalicki J."/>
            <person name="Graves T."/>
            <person name="Harmon G."/>
            <person name="Edwards J."/>
            <person name="Latreille P."/>
            <person name="Courtney L."/>
            <person name="Cloud J."/>
            <person name="Abbott A."/>
            <person name="Scott K."/>
            <person name="Johnson D."/>
            <person name="Minx P."/>
            <person name="Bentley D."/>
            <person name="Fulton B."/>
            <person name="Miller N."/>
            <person name="Greco T."/>
            <person name="Kemp K."/>
            <person name="Kramer J."/>
            <person name="Fulton L."/>
            <person name="Mardis E."/>
            <person name="Dante M."/>
            <person name="Pepin K."/>
            <person name="Hillier L.W."/>
            <person name="Nelson J."/>
            <person name="Spieth J."/>
            <person name="Ryan E."/>
            <person name="Andrews S."/>
            <person name="Geisel C."/>
            <person name="Layman D."/>
            <person name="Du H."/>
            <person name="Ali J."/>
            <person name="Berghoff A."/>
            <person name="Jones K."/>
            <person name="Drone K."/>
            <person name="Cotton M."/>
            <person name="Joshu C."/>
            <person name="Antonoiu B."/>
            <person name="Zidanic M."/>
            <person name="Strong C."/>
            <person name="Sun H."/>
            <person name="Lamar B."/>
            <person name="Yordan C."/>
            <person name="Ma P."/>
            <person name="Zhong J."/>
            <person name="Preston R."/>
            <person name="Vil D."/>
            <person name="Shekher M."/>
            <person name="Matero A."/>
            <person name="Shah R."/>
            <person name="Swaby I.K."/>
            <person name="O'Shaughnessy A."/>
            <person name="Rodriguez M."/>
            <person name="Hoffman J."/>
            <person name="Till S."/>
            <person name="Granat S."/>
            <person name="Shohdy N."/>
            <person name="Hasegawa A."/>
            <person name="Hameed A."/>
            <person name="Lodhi M."/>
            <person name="Johnson A."/>
            <person name="Chen E."/>
            <person name="Marra M.A."/>
            <person name="Martienssen R."/>
            <person name="McCombie W.R."/>
        </authorList>
    </citation>
    <scope>NUCLEOTIDE SEQUENCE [LARGE SCALE GENOMIC DNA]</scope>
    <source>
        <strain>cv. Columbia</strain>
    </source>
</reference>
<reference key="2">
    <citation type="journal article" date="2017" name="Plant J.">
        <title>Araport11: a complete reannotation of the Arabidopsis thaliana reference genome.</title>
        <authorList>
            <person name="Cheng C.Y."/>
            <person name="Krishnakumar V."/>
            <person name="Chan A.P."/>
            <person name="Thibaud-Nissen F."/>
            <person name="Schobel S."/>
            <person name="Town C.D."/>
        </authorList>
    </citation>
    <scope>GENOME REANNOTATION</scope>
    <source>
        <strain>cv. Columbia</strain>
    </source>
</reference>
<reference key="3">
    <citation type="journal article" date="2003" name="Science">
        <title>Empirical analysis of transcriptional activity in the Arabidopsis genome.</title>
        <authorList>
            <person name="Yamada K."/>
            <person name="Lim J."/>
            <person name="Dale J.M."/>
            <person name="Chen H."/>
            <person name="Shinn P."/>
            <person name="Palm C.J."/>
            <person name="Southwick A.M."/>
            <person name="Wu H.C."/>
            <person name="Kim C.J."/>
            <person name="Nguyen M."/>
            <person name="Pham P.K."/>
            <person name="Cheuk R.F."/>
            <person name="Karlin-Newmann G."/>
            <person name="Liu S.X."/>
            <person name="Lam B."/>
            <person name="Sakano H."/>
            <person name="Wu T."/>
            <person name="Yu G."/>
            <person name="Miranda M."/>
            <person name="Quach H.L."/>
            <person name="Tripp M."/>
            <person name="Chang C.H."/>
            <person name="Lee J.M."/>
            <person name="Toriumi M.J."/>
            <person name="Chan M.M."/>
            <person name="Tang C.C."/>
            <person name="Onodera C.S."/>
            <person name="Deng J.M."/>
            <person name="Akiyama K."/>
            <person name="Ansari Y."/>
            <person name="Arakawa T."/>
            <person name="Banh J."/>
            <person name="Banno F."/>
            <person name="Bowser L."/>
            <person name="Brooks S.Y."/>
            <person name="Carninci P."/>
            <person name="Chao Q."/>
            <person name="Choy N."/>
            <person name="Enju A."/>
            <person name="Goldsmith A.D."/>
            <person name="Gurjal M."/>
            <person name="Hansen N.F."/>
            <person name="Hayashizaki Y."/>
            <person name="Johnson-Hopson C."/>
            <person name="Hsuan V.W."/>
            <person name="Iida K."/>
            <person name="Karnes M."/>
            <person name="Khan S."/>
            <person name="Koesema E."/>
            <person name="Ishida J."/>
            <person name="Jiang P.X."/>
            <person name="Jones T."/>
            <person name="Kawai J."/>
            <person name="Kamiya A."/>
            <person name="Meyers C."/>
            <person name="Nakajima M."/>
            <person name="Narusaka M."/>
            <person name="Seki M."/>
            <person name="Sakurai T."/>
            <person name="Satou M."/>
            <person name="Tamse R."/>
            <person name="Vaysberg M."/>
            <person name="Wallender E.K."/>
            <person name="Wong C."/>
            <person name="Yamamura Y."/>
            <person name="Yuan S."/>
            <person name="Shinozaki K."/>
            <person name="Davis R.W."/>
            <person name="Theologis A."/>
            <person name="Ecker J.R."/>
        </authorList>
    </citation>
    <scope>NUCLEOTIDE SEQUENCE [LARGE SCALE MRNA]</scope>
    <source>
        <strain>cv. Columbia</strain>
    </source>
</reference>
<reference key="4">
    <citation type="submission" date="2006-07" db="EMBL/GenBank/DDBJ databases">
        <title>Large-scale analysis of RIKEN Arabidopsis full-length (RAFL) cDNAs.</title>
        <authorList>
            <person name="Totoki Y."/>
            <person name="Seki M."/>
            <person name="Ishida J."/>
            <person name="Nakajima M."/>
            <person name="Enju A."/>
            <person name="Kamiya A."/>
            <person name="Narusaka M."/>
            <person name="Shin-i T."/>
            <person name="Nakagawa M."/>
            <person name="Sakamoto N."/>
            <person name="Oishi K."/>
            <person name="Kohara Y."/>
            <person name="Kobayashi M."/>
            <person name="Toyoda A."/>
            <person name="Sakaki Y."/>
            <person name="Sakurai T."/>
            <person name="Iida K."/>
            <person name="Akiyama K."/>
            <person name="Satou M."/>
            <person name="Toyoda T."/>
            <person name="Konagaya A."/>
            <person name="Carninci P."/>
            <person name="Kawai J."/>
            <person name="Hayashizaki Y."/>
            <person name="Shinozaki K."/>
        </authorList>
    </citation>
    <scope>NUCLEOTIDE SEQUENCE [LARGE SCALE MRNA]</scope>
    <source>
        <strain>cv. Columbia</strain>
    </source>
</reference>
<reference key="5">
    <citation type="journal article" date="2012" name="Front. Plant Sci.">
        <title>Plant glycosyltransferases beyond CAZy: a perspective on DUF families.</title>
        <authorList>
            <person name="Hansen S.F."/>
            <person name="Harholt J."/>
            <person name="Oikawa A."/>
            <person name="Scheller H.V."/>
        </authorList>
    </citation>
    <scope>GENE FAMILY</scope>
    <scope>REVIEW</scope>
</reference>
<reference key="6">
    <citation type="journal article" date="2012" name="PLoS ONE">
        <title>The FRIABLE1 gene product affects cell adhesion in Arabidopsis.</title>
        <authorList>
            <person name="Neumetzler L."/>
            <person name="Humphrey T."/>
            <person name="Lumba S."/>
            <person name="Snyder S."/>
            <person name="Yeats T.H."/>
            <person name="Usadel B."/>
            <person name="Vasilevski A."/>
            <person name="Patel J."/>
            <person name="Rose J.K."/>
            <person name="Persson S."/>
            <person name="Bonetta D."/>
        </authorList>
    </citation>
    <scope>GENE FAMILY</scope>
</reference>
<reference key="7">
    <citation type="journal article" date="2012" name="PLoS ONE">
        <title>Identification of putative rhamnogalacturonan-II specific glycosyltransferases in Arabidopsis using a combination of bioinformatics approaches.</title>
        <authorList>
            <person name="Voxeur A."/>
            <person name="Andre A."/>
            <person name="Breton C."/>
            <person name="Lerouge P."/>
        </authorList>
    </citation>
    <scope>GENE FAMILY</scope>
</reference>
<reference key="8">
    <citation type="journal article" date="2013" name="Plant J.">
        <title>Identification of an additional protein involved in mannan biosynthesis.</title>
        <authorList>
            <person name="Wang Y."/>
            <person name="Mortimer J.C."/>
            <person name="Davis J."/>
            <person name="Dupree P."/>
            <person name="Keegstra K."/>
        </authorList>
    </citation>
    <scope>GENE FAMILY</scope>
</reference>
<reference key="9">
    <citation type="journal article" date="2014" name="Plant J.">
        <title>The plant glycosyltransferase clone collection for functional genomics.</title>
        <authorList>
            <person name="Lao J."/>
            <person name="Oikawa A."/>
            <person name="Bromley J.R."/>
            <person name="McInerney P."/>
            <person name="Suttangkakul A."/>
            <person name="Smith-Moritz A.M."/>
            <person name="Plahar H."/>
            <person name="Chiu T.-Y."/>
            <person name="Gonzalez Fernandez-Nino S.M.G."/>
            <person name="Ebert B."/>
            <person name="Yang F."/>
            <person name="Christiansen K.M."/>
            <person name="Hansen S.F."/>
            <person name="Stonebloom S."/>
            <person name="Adams P.D."/>
            <person name="Ronald P.C."/>
            <person name="Hillson N.J."/>
            <person name="Hadi M.Z."/>
            <person name="Vega-Sanchez M.E."/>
            <person name="Loque D."/>
            <person name="Scheller H.V."/>
            <person name="Heazlewood J.L."/>
        </authorList>
    </citation>
    <scope>WEB RESOURCE</scope>
</reference>
<feature type="chain" id="PRO_0000442093" description="O-fucosyltransferase 31">
    <location>
        <begin position="1"/>
        <end position="519"/>
    </location>
</feature>
<feature type="transmembrane region" description="Helical; Signal-anchor for type II membrane protein" evidence="4">
    <location>
        <begin position="18"/>
        <end position="38"/>
    </location>
</feature>
<feature type="binding site" evidence="1">
    <location>
        <begin position="302"/>
        <end position="304"/>
    </location>
    <ligand>
        <name>substrate</name>
    </ligand>
</feature>
<feature type="glycosylation site" description="N-linked (GlcNAc...) asparagine" evidence="3">
    <location>
        <position position="131"/>
    </location>
</feature>
<feature type="glycosylation site" description="N-linked (GlcNAc...) asparagine" evidence="3">
    <location>
        <position position="373"/>
    </location>
</feature>
<feature type="glycosylation site" description="N-linked (GlcNAc...) asparagine" evidence="3">
    <location>
        <position position="474"/>
    </location>
</feature>
<keyword id="KW-0119">Carbohydrate metabolism</keyword>
<keyword id="KW-0294">Fucose metabolism</keyword>
<keyword id="KW-0325">Glycoprotein</keyword>
<keyword id="KW-0328">Glycosyltransferase</keyword>
<keyword id="KW-0472">Membrane</keyword>
<keyword id="KW-1185">Reference proteome</keyword>
<keyword id="KW-0735">Signal-anchor</keyword>
<keyword id="KW-0808">Transferase</keyword>
<keyword id="KW-0812">Transmembrane</keyword>
<keyword id="KW-1133">Transmembrane helix</keyword>
<evidence type="ECO:0000250" key="1">
    <source>
        <dbReference type="UniProtKB" id="Q9H488"/>
    </source>
</evidence>
<evidence type="ECO:0000255" key="2"/>
<evidence type="ECO:0000255" key="3">
    <source>
        <dbReference type="PROSITE-ProRule" id="PRU00498"/>
    </source>
</evidence>
<evidence type="ECO:0000305" key="4"/>
<evidence type="ECO:0000312" key="5">
    <source>
        <dbReference type="Araport" id="AT4G24530"/>
    </source>
</evidence>
<evidence type="ECO:0000312" key="6">
    <source>
        <dbReference type="EMBL" id="CAA23010.1"/>
    </source>
</evidence>
<accession>Q7Y030</accession>
<accession>Q9SB49</accession>
<organism>
    <name type="scientific">Arabidopsis thaliana</name>
    <name type="common">Mouse-ear cress</name>
    <dbReference type="NCBI Taxonomy" id="3702"/>
    <lineage>
        <taxon>Eukaryota</taxon>
        <taxon>Viridiplantae</taxon>
        <taxon>Streptophyta</taxon>
        <taxon>Embryophyta</taxon>
        <taxon>Tracheophyta</taxon>
        <taxon>Spermatophyta</taxon>
        <taxon>Magnoliopsida</taxon>
        <taxon>eudicotyledons</taxon>
        <taxon>Gunneridae</taxon>
        <taxon>Pentapetalae</taxon>
        <taxon>rosids</taxon>
        <taxon>malvids</taxon>
        <taxon>Brassicales</taxon>
        <taxon>Brassicaceae</taxon>
        <taxon>Camelineae</taxon>
        <taxon>Arabidopsis</taxon>
    </lineage>
</organism>
<proteinExistence type="evidence at transcript level"/>
<comment type="pathway">
    <text evidence="4">Glycan metabolism.</text>
</comment>
<comment type="subcellular location">
    <subcellularLocation>
        <location evidence="2">Membrane</location>
        <topology evidence="4">Single-pass type II membrane protein</topology>
    </subcellularLocation>
</comment>
<comment type="similarity">
    <text evidence="4">Belongs to the glycosyltransferase GT106 family.</text>
</comment>
<comment type="sequence caution" evidence="4">
    <conflict type="erroneous gene model prediction">
        <sequence resource="EMBL-CDS" id="CAA23010"/>
    </conflict>
</comment>
<comment type="sequence caution" evidence="4">
    <conflict type="erroneous gene model prediction">
        <sequence resource="EMBL-CDS" id="CAB79363"/>
    </conflict>
</comment>
<gene>
    <name evidence="4" type="primary">OFUT31</name>
    <name evidence="5" type="ordered locus">At4g24530</name>
    <name evidence="6" type="ORF">F22K18.270</name>
</gene>
<protein>
    <recommendedName>
        <fullName evidence="4">O-fucosyltransferase 31</fullName>
        <shortName evidence="4">O-FucT-31</shortName>
        <ecNumber evidence="4">2.4.1.-</ecNumber>
    </recommendedName>
    <alternativeName>
        <fullName evidence="4">O-fucosyltransferase family protein</fullName>
    </alternativeName>
</protein>
<dbReference type="EC" id="2.4.1.-" evidence="4"/>
<dbReference type="EMBL" id="AL035356">
    <property type="protein sequence ID" value="CAA23010.1"/>
    <property type="status" value="ALT_SEQ"/>
    <property type="molecule type" value="Genomic_DNA"/>
</dbReference>
<dbReference type="EMBL" id="AL161561">
    <property type="protein sequence ID" value="CAB79363.1"/>
    <property type="status" value="ALT_SEQ"/>
    <property type="molecule type" value="Genomic_DNA"/>
</dbReference>
<dbReference type="EMBL" id="CP002687">
    <property type="protein sequence ID" value="AEE84921.1"/>
    <property type="molecule type" value="Genomic_DNA"/>
</dbReference>
<dbReference type="EMBL" id="BT008775">
    <property type="protein sequence ID" value="AAP68214.1"/>
    <property type="molecule type" value="mRNA"/>
</dbReference>
<dbReference type="EMBL" id="AK227813">
    <property type="protein sequence ID" value="BAE99793.1"/>
    <property type="molecule type" value="mRNA"/>
</dbReference>
<dbReference type="PIR" id="T05581">
    <property type="entry name" value="T05581"/>
</dbReference>
<dbReference type="RefSeq" id="NP_194184.2">
    <property type="nucleotide sequence ID" value="NM_118586.4"/>
</dbReference>
<dbReference type="FunCoup" id="Q7Y030">
    <property type="interactions" value="2125"/>
</dbReference>
<dbReference type="GlyCosmos" id="Q7Y030">
    <property type="glycosylation" value="3 sites, No reported glycans"/>
</dbReference>
<dbReference type="GlyGen" id="Q7Y030">
    <property type="glycosylation" value="3 sites"/>
</dbReference>
<dbReference type="PaxDb" id="3702-AT4G24530.1"/>
<dbReference type="ProteomicsDB" id="250895"/>
<dbReference type="EnsemblPlants" id="AT4G24530.1">
    <property type="protein sequence ID" value="AT4G24530.1"/>
    <property type="gene ID" value="AT4G24530"/>
</dbReference>
<dbReference type="GeneID" id="828555"/>
<dbReference type="Gramene" id="AT4G24530.1">
    <property type="protein sequence ID" value="AT4G24530.1"/>
    <property type="gene ID" value="AT4G24530"/>
</dbReference>
<dbReference type="KEGG" id="ath:AT4G24530"/>
<dbReference type="Araport" id="AT4G24530"/>
<dbReference type="TAIR" id="AT4G24530"/>
<dbReference type="eggNOG" id="ENOG502QUG0">
    <property type="taxonomic scope" value="Eukaryota"/>
</dbReference>
<dbReference type="HOGENOM" id="CLU_018420_8_2_1"/>
<dbReference type="InParanoid" id="Q7Y030"/>
<dbReference type="OMA" id="PEIEHTC"/>
<dbReference type="PhylomeDB" id="Q7Y030"/>
<dbReference type="PRO" id="PR:Q7Y030"/>
<dbReference type="Proteomes" id="UP000006548">
    <property type="component" value="Chromosome 4"/>
</dbReference>
<dbReference type="ExpressionAtlas" id="Q7Y030">
    <property type="expression patterns" value="baseline and differential"/>
</dbReference>
<dbReference type="GO" id="GO:0000137">
    <property type="term" value="C:Golgi cis cisterna"/>
    <property type="evidence" value="ECO:0007005"/>
    <property type="project" value="TAIR"/>
</dbReference>
<dbReference type="GO" id="GO:0016020">
    <property type="term" value="C:membrane"/>
    <property type="evidence" value="ECO:0007669"/>
    <property type="project" value="UniProtKB-SubCell"/>
</dbReference>
<dbReference type="GO" id="GO:0016757">
    <property type="term" value="F:glycosyltransferase activity"/>
    <property type="evidence" value="ECO:0007669"/>
    <property type="project" value="UniProtKB-KW"/>
</dbReference>
<dbReference type="GO" id="GO:0006004">
    <property type="term" value="P:fucose metabolic process"/>
    <property type="evidence" value="ECO:0007669"/>
    <property type="project" value="UniProtKB-KW"/>
</dbReference>
<dbReference type="CDD" id="cd11299">
    <property type="entry name" value="O-FucT_plant"/>
    <property type="match status" value="1"/>
</dbReference>
<dbReference type="InterPro" id="IPR024709">
    <property type="entry name" value="FucosylTrfase_pln"/>
</dbReference>
<dbReference type="InterPro" id="IPR019378">
    <property type="entry name" value="GDP-Fuc_O-FucTrfase"/>
</dbReference>
<dbReference type="InterPro" id="IPR052272">
    <property type="entry name" value="GT106_glycosyltransferase"/>
</dbReference>
<dbReference type="PANTHER" id="PTHR31933">
    <property type="entry name" value="O-FUCOSYLTRANSFERASE 2-RELATED"/>
    <property type="match status" value="1"/>
</dbReference>
<dbReference type="PANTHER" id="PTHR31933:SF5">
    <property type="entry name" value="O-FUCOSYLTRANSFERASE 31"/>
    <property type="match status" value="1"/>
</dbReference>
<dbReference type="Pfam" id="PF10250">
    <property type="entry name" value="O-FucT"/>
    <property type="match status" value="1"/>
</dbReference>
<dbReference type="PIRSF" id="PIRSF009360">
    <property type="entry name" value="UCP009360"/>
    <property type="match status" value="1"/>
</dbReference>
<name>OFT31_ARATH</name>
<sequence>MLQMKQPLQNLNQSQKTALAGVFVLLFPILYPNLFSPLGRASPSLFSEWNAPRPRHLSLLQGALDRQISIRQQVELWSPLADQGWKPCTESYRGASLPEKSEGFLQVFLDGGLNQQRMGICDAVAVAKIMNVTLVIPRLEVNTVWQDSSSFTDIFDLDHFISVLKDEVRIVRELPIQYAWSTRDYYATGIRATRIKTAPVHASAEWYLENVLPIIQSYGIAAVAPFSHRLAFDNLPESIQRLRCKVNFEALNFVPHIRELGDALVHRLRNPPSSSQTSGTMDPTDRINTIVKAGAGKFAVLHLRFDKDMAAHSGCDFEGGKAEKLALAKYRQVIWQGRVLNSQFTDEELRNKGRCPLTPEEIGLLLSALGFSNNTRLYLASHQVYGGEARISTLRKLFPGIENKKSLASAEELADVQGKASLMAAVDYYVSMKSDIFISASPGNMHNALQAHRAYLNLKTIRPNMILLGQVFVNKSLDWSEFEGAVMNGHKNRQGQLRLRKQKQSIYTYPAPDCMCKVA</sequence>